<feature type="chain" id="PRO_0000141187" description="Ribose-phosphate pyrophosphokinase">
    <location>
        <begin position="1"/>
        <end position="321"/>
    </location>
</feature>
<feature type="active site" evidence="1">
    <location>
        <position position="202"/>
    </location>
</feature>
<feature type="binding site" evidence="1">
    <location>
        <begin position="44"/>
        <end position="46"/>
    </location>
    <ligand>
        <name>ATP</name>
        <dbReference type="ChEBI" id="CHEBI:30616"/>
    </ligand>
</feature>
<feature type="binding site" evidence="1">
    <location>
        <begin position="103"/>
        <end position="104"/>
    </location>
    <ligand>
        <name>ATP</name>
        <dbReference type="ChEBI" id="CHEBI:30616"/>
    </ligand>
</feature>
<feature type="binding site" evidence="1">
    <location>
        <position position="137"/>
    </location>
    <ligand>
        <name>Mg(2+)</name>
        <dbReference type="ChEBI" id="CHEBI:18420"/>
        <label>1</label>
    </ligand>
</feature>
<feature type="binding site" evidence="1">
    <location>
        <position position="179"/>
    </location>
    <ligand>
        <name>Mg(2+)</name>
        <dbReference type="ChEBI" id="CHEBI:18420"/>
        <label>2</label>
    </ligand>
</feature>
<feature type="binding site" evidence="1">
    <location>
        <position position="204"/>
    </location>
    <ligand>
        <name>D-ribose 5-phosphate</name>
        <dbReference type="ChEBI" id="CHEBI:78346"/>
    </ligand>
</feature>
<feature type="binding site" evidence="1">
    <location>
        <position position="228"/>
    </location>
    <ligand>
        <name>D-ribose 5-phosphate</name>
        <dbReference type="ChEBI" id="CHEBI:78346"/>
    </ligand>
</feature>
<feature type="binding site" evidence="1">
    <location>
        <begin position="232"/>
        <end position="236"/>
    </location>
    <ligand>
        <name>D-ribose 5-phosphate</name>
        <dbReference type="ChEBI" id="CHEBI:78346"/>
    </ligand>
</feature>
<proteinExistence type="inferred from homology"/>
<protein>
    <recommendedName>
        <fullName evidence="1">Ribose-phosphate pyrophosphokinase</fullName>
        <shortName evidence="1">RPPK</shortName>
        <ecNumber evidence="1">2.7.6.1</ecNumber>
    </recommendedName>
    <alternativeName>
        <fullName evidence="1">5-phospho-D-ribosyl alpha-1-diphosphate synthase</fullName>
    </alternativeName>
    <alternativeName>
        <fullName evidence="1">Phosphoribosyl diphosphate synthase</fullName>
    </alternativeName>
    <alternativeName>
        <fullName evidence="1">Phosphoribosyl pyrophosphate synthase</fullName>
        <shortName evidence="1">P-Rib-PP synthase</shortName>
        <shortName evidence="1">PRPP synthase</shortName>
        <shortName evidence="1">PRPPase</shortName>
    </alternativeName>
</protein>
<gene>
    <name evidence="1" type="primary">prs</name>
    <name type="ordered locus">SAV0500</name>
</gene>
<reference key="1">
    <citation type="journal article" date="2001" name="Lancet">
        <title>Whole genome sequencing of meticillin-resistant Staphylococcus aureus.</title>
        <authorList>
            <person name="Kuroda M."/>
            <person name="Ohta T."/>
            <person name="Uchiyama I."/>
            <person name="Baba T."/>
            <person name="Yuzawa H."/>
            <person name="Kobayashi I."/>
            <person name="Cui L."/>
            <person name="Oguchi A."/>
            <person name="Aoki K."/>
            <person name="Nagai Y."/>
            <person name="Lian J.-Q."/>
            <person name="Ito T."/>
            <person name="Kanamori M."/>
            <person name="Matsumaru H."/>
            <person name="Maruyama A."/>
            <person name="Murakami H."/>
            <person name="Hosoyama A."/>
            <person name="Mizutani-Ui Y."/>
            <person name="Takahashi N.K."/>
            <person name="Sawano T."/>
            <person name="Inoue R."/>
            <person name="Kaito C."/>
            <person name="Sekimizu K."/>
            <person name="Hirakawa H."/>
            <person name="Kuhara S."/>
            <person name="Goto S."/>
            <person name="Yabuzaki J."/>
            <person name="Kanehisa M."/>
            <person name="Yamashita A."/>
            <person name="Oshima K."/>
            <person name="Furuya K."/>
            <person name="Yoshino C."/>
            <person name="Shiba T."/>
            <person name="Hattori M."/>
            <person name="Ogasawara N."/>
            <person name="Hayashi H."/>
            <person name="Hiramatsu K."/>
        </authorList>
    </citation>
    <scope>NUCLEOTIDE SEQUENCE [LARGE SCALE GENOMIC DNA]</scope>
    <source>
        <strain>Mu50 / ATCC 700699</strain>
    </source>
</reference>
<name>KPRS_STAAM</name>
<evidence type="ECO:0000255" key="1">
    <source>
        <dbReference type="HAMAP-Rule" id="MF_00583"/>
    </source>
</evidence>
<keyword id="KW-0067">ATP-binding</keyword>
<keyword id="KW-0963">Cytoplasm</keyword>
<keyword id="KW-0418">Kinase</keyword>
<keyword id="KW-0460">Magnesium</keyword>
<keyword id="KW-0479">Metal-binding</keyword>
<keyword id="KW-0545">Nucleotide biosynthesis</keyword>
<keyword id="KW-0547">Nucleotide-binding</keyword>
<keyword id="KW-0808">Transferase</keyword>
<dbReference type="EC" id="2.7.6.1" evidence="1"/>
<dbReference type="EMBL" id="BA000017">
    <property type="protein sequence ID" value="BAB56662.1"/>
    <property type="molecule type" value="Genomic_DNA"/>
</dbReference>
<dbReference type="RefSeq" id="WP_000933774.1">
    <property type="nucleotide sequence ID" value="NC_002758.2"/>
</dbReference>
<dbReference type="SMR" id="P65236"/>
<dbReference type="KEGG" id="sav:SAV0500"/>
<dbReference type="HOGENOM" id="CLU_033546_1_0_9"/>
<dbReference type="PhylomeDB" id="P65236"/>
<dbReference type="UniPathway" id="UPA00087">
    <property type="reaction ID" value="UER00172"/>
</dbReference>
<dbReference type="Proteomes" id="UP000002481">
    <property type="component" value="Chromosome"/>
</dbReference>
<dbReference type="GO" id="GO:0005737">
    <property type="term" value="C:cytoplasm"/>
    <property type="evidence" value="ECO:0007669"/>
    <property type="project" value="UniProtKB-SubCell"/>
</dbReference>
<dbReference type="GO" id="GO:0002189">
    <property type="term" value="C:ribose phosphate diphosphokinase complex"/>
    <property type="evidence" value="ECO:0007669"/>
    <property type="project" value="TreeGrafter"/>
</dbReference>
<dbReference type="GO" id="GO:0005524">
    <property type="term" value="F:ATP binding"/>
    <property type="evidence" value="ECO:0007669"/>
    <property type="project" value="UniProtKB-KW"/>
</dbReference>
<dbReference type="GO" id="GO:0016301">
    <property type="term" value="F:kinase activity"/>
    <property type="evidence" value="ECO:0007669"/>
    <property type="project" value="UniProtKB-KW"/>
</dbReference>
<dbReference type="GO" id="GO:0000287">
    <property type="term" value="F:magnesium ion binding"/>
    <property type="evidence" value="ECO:0007669"/>
    <property type="project" value="UniProtKB-UniRule"/>
</dbReference>
<dbReference type="GO" id="GO:0004749">
    <property type="term" value="F:ribose phosphate diphosphokinase activity"/>
    <property type="evidence" value="ECO:0007669"/>
    <property type="project" value="UniProtKB-UniRule"/>
</dbReference>
<dbReference type="GO" id="GO:0006015">
    <property type="term" value="P:5-phosphoribose 1-diphosphate biosynthetic process"/>
    <property type="evidence" value="ECO:0007669"/>
    <property type="project" value="UniProtKB-UniRule"/>
</dbReference>
<dbReference type="GO" id="GO:0006164">
    <property type="term" value="P:purine nucleotide biosynthetic process"/>
    <property type="evidence" value="ECO:0007669"/>
    <property type="project" value="TreeGrafter"/>
</dbReference>
<dbReference type="GO" id="GO:0009156">
    <property type="term" value="P:ribonucleoside monophosphate biosynthetic process"/>
    <property type="evidence" value="ECO:0007669"/>
    <property type="project" value="InterPro"/>
</dbReference>
<dbReference type="CDD" id="cd06223">
    <property type="entry name" value="PRTases_typeI"/>
    <property type="match status" value="1"/>
</dbReference>
<dbReference type="FunFam" id="3.40.50.2020:FF:000002">
    <property type="entry name" value="Ribose-phosphate pyrophosphokinase"/>
    <property type="match status" value="1"/>
</dbReference>
<dbReference type="FunFam" id="3.40.50.2020:FF:000014">
    <property type="entry name" value="Ribose-phosphate pyrophosphokinase 1"/>
    <property type="match status" value="1"/>
</dbReference>
<dbReference type="Gene3D" id="3.40.50.2020">
    <property type="match status" value="2"/>
</dbReference>
<dbReference type="HAMAP" id="MF_00583_B">
    <property type="entry name" value="RibP_PPkinase_B"/>
    <property type="match status" value="1"/>
</dbReference>
<dbReference type="InterPro" id="IPR000842">
    <property type="entry name" value="PRib_PP_synth_CS"/>
</dbReference>
<dbReference type="InterPro" id="IPR029099">
    <property type="entry name" value="Pribosyltran_N"/>
</dbReference>
<dbReference type="InterPro" id="IPR000836">
    <property type="entry name" value="PRibTrfase_dom"/>
</dbReference>
<dbReference type="InterPro" id="IPR029057">
    <property type="entry name" value="PRTase-like"/>
</dbReference>
<dbReference type="InterPro" id="IPR005946">
    <property type="entry name" value="Rib-P_diPkinase"/>
</dbReference>
<dbReference type="InterPro" id="IPR037515">
    <property type="entry name" value="Rib-P_diPkinase_bac"/>
</dbReference>
<dbReference type="NCBIfam" id="NF002320">
    <property type="entry name" value="PRK01259.1"/>
    <property type="match status" value="1"/>
</dbReference>
<dbReference type="NCBIfam" id="NF002618">
    <property type="entry name" value="PRK02269.1"/>
    <property type="match status" value="1"/>
</dbReference>
<dbReference type="NCBIfam" id="TIGR01251">
    <property type="entry name" value="ribP_PPkin"/>
    <property type="match status" value="1"/>
</dbReference>
<dbReference type="PANTHER" id="PTHR10210">
    <property type="entry name" value="RIBOSE-PHOSPHATE DIPHOSPHOKINASE FAMILY MEMBER"/>
    <property type="match status" value="1"/>
</dbReference>
<dbReference type="PANTHER" id="PTHR10210:SF41">
    <property type="entry name" value="RIBOSE-PHOSPHATE PYROPHOSPHOKINASE 1, CHLOROPLASTIC"/>
    <property type="match status" value="1"/>
</dbReference>
<dbReference type="Pfam" id="PF14572">
    <property type="entry name" value="Pribosyl_synth"/>
    <property type="match status" value="1"/>
</dbReference>
<dbReference type="Pfam" id="PF13793">
    <property type="entry name" value="Pribosyltran_N"/>
    <property type="match status" value="1"/>
</dbReference>
<dbReference type="SMART" id="SM01400">
    <property type="entry name" value="Pribosyltran_N"/>
    <property type="match status" value="1"/>
</dbReference>
<dbReference type="SUPFAM" id="SSF53271">
    <property type="entry name" value="PRTase-like"/>
    <property type="match status" value="1"/>
</dbReference>
<dbReference type="PROSITE" id="PS00114">
    <property type="entry name" value="PRPP_SYNTHASE"/>
    <property type="match status" value="1"/>
</dbReference>
<accession>P65236</accession>
<accession>Q99WA3</accession>
<comment type="function">
    <text evidence="1">Involved in the biosynthesis of the central metabolite phospho-alpha-D-ribosyl-1-pyrophosphate (PRPP) via the transfer of pyrophosphoryl group from ATP to 1-hydroxyl of ribose-5-phosphate (Rib-5-P).</text>
</comment>
<comment type="catalytic activity">
    <reaction evidence="1">
        <text>D-ribose 5-phosphate + ATP = 5-phospho-alpha-D-ribose 1-diphosphate + AMP + H(+)</text>
        <dbReference type="Rhea" id="RHEA:15609"/>
        <dbReference type="ChEBI" id="CHEBI:15378"/>
        <dbReference type="ChEBI" id="CHEBI:30616"/>
        <dbReference type="ChEBI" id="CHEBI:58017"/>
        <dbReference type="ChEBI" id="CHEBI:78346"/>
        <dbReference type="ChEBI" id="CHEBI:456215"/>
        <dbReference type="EC" id="2.7.6.1"/>
    </reaction>
</comment>
<comment type="cofactor">
    <cofactor evidence="1">
        <name>Mg(2+)</name>
        <dbReference type="ChEBI" id="CHEBI:18420"/>
    </cofactor>
    <text evidence="1">Binds 2 Mg(2+) ions per subunit.</text>
</comment>
<comment type="pathway">
    <text evidence="1">Metabolic intermediate biosynthesis; 5-phospho-alpha-D-ribose 1-diphosphate biosynthesis; 5-phospho-alpha-D-ribose 1-diphosphate from D-ribose 5-phosphate (route I): step 1/1.</text>
</comment>
<comment type="subunit">
    <text evidence="1">Homohexamer.</text>
</comment>
<comment type="subcellular location">
    <subcellularLocation>
        <location evidence="1">Cytoplasm</location>
    </subcellularLocation>
</comment>
<comment type="similarity">
    <text evidence="1">Belongs to the ribose-phosphate pyrophosphokinase family. Class I subfamily.</text>
</comment>
<organism>
    <name type="scientific">Staphylococcus aureus (strain Mu50 / ATCC 700699)</name>
    <dbReference type="NCBI Taxonomy" id="158878"/>
    <lineage>
        <taxon>Bacteria</taxon>
        <taxon>Bacillati</taxon>
        <taxon>Bacillota</taxon>
        <taxon>Bacilli</taxon>
        <taxon>Bacillales</taxon>
        <taxon>Staphylococcaceae</taxon>
        <taxon>Staphylococcus</taxon>
    </lineage>
</organism>
<sequence>MLNNEYKNSSLKIFSLKGNEALAQEVADQVGIELGKCSVKRFSDGEIQINIEESIRGCDVFIIQPTSYPVNLHLMELLIMIDACKRASAATINIVVPYYGYARQDRKARSREPITAKLVANLIETAGATRMIALDLHAPQIQGFFDIPIDHLMGVPILAKHFKDDPNINPEECVVVSPDHGGVTRARKLADILKTPIAIIDKRRPRPNVAEVMNIVGEIEGRTAIIIDDIIDTAGTITLAAQALKDKGAKEVYACCTHPVLSGPAKERIENSAIKELIVTNSIHLDEDRKPSNTKELSVAGLIAQAIIRVYERESVSVLFD</sequence>